<name>PYRD_CORDI</name>
<comment type="function">
    <text evidence="1">Catalyzes the conversion of dihydroorotate to orotate with quinone as electron acceptor.</text>
</comment>
<comment type="catalytic activity">
    <reaction evidence="1">
        <text>(S)-dihydroorotate + a quinone = orotate + a quinol</text>
        <dbReference type="Rhea" id="RHEA:30187"/>
        <dbReference type="ChEBI" id="CHEBI:24646"/>
        <dbReference type="ChEBI" id="CHEBI:30839"/>
        <dbReference type="ChEBI" id="CHEBI:30864"/>
        <dbReference type="ChEBI" id="CHEBI:132124"/>
        <dbReference type="EC" id="1.3.5.2"/>
    </reaction>
</comment>
<comment type="cofactor">
    <cofactor evidence="1">
        <name>FMN</name>
        <dbReference type="ChEBI" id="CHEBI:58210"/>
    </cofactor>
    <text evidence="1">Binds 1 FMN per subunit.</text>
</comment>
<comment type="pathway">
    <text evidence="1">Pyrimidine metabolism; UMP biosynthesis via de novo pathway; orotate from (S)-dihydroorotate (quinone route): step 1/1.</text>
</comment>
<comment type="subunit">
    <text evidence="1">Monomer.</text>
</comment>
<comment type="subcellular location">
    <subcellularLocation>
        <location evidence="1">Cell membrane</location>
        <topology evidence="1">Peripheral membrane protein</topology>
    </subcellularLocation>
</comment>
<comment type="similarity">
    <text evidence="1">Belongs to the dihydroorotate dehydrogenase family. Type 2 subfamily.</text>
</comment>
<reference key="1">
    <citation type="journal article" date="2003" name="Nucleic Acids Res.">
        <title>The complete genome sequence and analysis of Corynebacterium diphtheriae NCTC13129.</title>
        <authorList>
            <person name="Cerdeno-Tarraga A.-M."/>
            <person name="Efstratiou A."/>
            <person name="Dover L.G."/>
            <person name="Holden M.T.G."/>
            <person name="Pallen M.J."/>
            <person name="Bentley S.D."/>
            <person name="Besra G.S."/>
            <person name="Churcher C.M."/>
            <person name="James K.D."/>
            <person name="De Zoysa A."/>
            <person name="Chillingworth T."/>
            <person name="Cronin A."/>
            <person name="Dowd L."/>
            <person name="Feltwell T."/>
            <person name="Hamlin N."/>
            <person name="Holroyd S."/>
            <person name="Jagels K."/>
            <person name="Moule S."/>
            <person name="Quail M.A."/>
            <person name="Rabbinowitsch E."/>
            <person name="Rutherford K.M."/>
            <person name="Thomson N.R."/>
            <person name="Unwin L."/>
            <person name="Whitehead S."/>
            <person name="Barrell B.G."/>
            <person name="Parkhill J."/>
        </authorList>
    </citation>
    <scope>NUCLEOTIDE SEQUENCE [LARGE SCALE GENOMIC DNA]</scope>
    <source>
        <strain>ATCC 700971 / NCTC 13129 / Biotype gravis</strain>
    </source>
</reference>
<feature type="chain" id="PRO_0000148431" description="Dihydroorotate dehydrogenase (quinone)">
    <location>
        <begin position="1"/>
        <end position="363"/>
    </location>
</feature>
<feature type="active site" description="Nucleophile" evidence="1">
    <location>
        <position position="183"/>
    </location>
</feature>
<feature type="binding site" evidence="1">
    <location>
        <begin position="70"/>
        <end position="74"/>
    </location>
    <ligand>
        <name>FMN</name>
        <dbReference type="ChEBI" id="CHEBI:58210"/>
    </ligand>
</feature>
<feature type="binding site" evidence="1">
    <location>
        <position position="74"/>
    </location>
    <ligand>
        <name>substrate</name>
    </ligand>
</feature>
<feature type="binding site" evidence="1">
    <location>
        <position position="94"/>
    </location>
    <ligand>
        <name>FMN</name>
        <dbReference type="ChEBI" id="CHEBI:58210"/>
    </ligand>
</feature>
<feature type="binding site" evidence="1">
    <location>
        <begin position="119"/>
        <end position="123"/>
    </location>
    <ligand>
        <name>substrate</name>
    </ligand>
</feature>
<feature type="binding site" evidence="1">
    <location>
        <position position="147"/>
    </location>
    <ligand>
        <name>FMN</name>
        <dbReference type="ChEBI" id="CHEBI:58210"/>
    </ligand>
</feature>
<feature type="binding site" evidence="1">
    <location>
        <position position="180"/>
    </location>
    <ligand>
        <name>FMN</name>
        <dbReference type="ChEBI" id="CHEBI:58210"/>
    </ligand>
</feature>
<feature type="binding site" evidence="1">
    <location>
        <position position="180"/>
    </location>
    <ligand>
        <name>substrate</name>
    </ligand>
</feature>
<feature type="binding site" evidence="1">
    <location>
        <position position="185"/>
    </location>
    <ligand>
        <name>substrate</name>
    </ligand>
</feature>
<feature type="binding site" evidence="1">
    <location>
        <position position="216"/>
    </location>
    <ligand>
        <name>FMN</name>
        <dbReference type="ChEBI" id="CHEBI:58210"/>
    </ligand>
</feature>
<feature type="binding site" evidence="1">
    <location>
        <position position="244"/>
    </location>
    <ligand>
        <name>FMN</name>
        <dbReference type="ChEBI" id="CHEBI:58210"/>
    </ligand>
</feature>
<feature type="binding site" evidence="1">
    <location>
        <begin position="245"/>
        <end position="246"/>
    </location>
    <ligand>
        <name>substrate</name>
    </ligand>
</feature>
<feature type="binding site" evidence="1">
    <location>
        <position position="270"/>
    </location>
    <ligand>
        <name>FMN</name>
        <dbReference type="ChEBI" id="CHEBI:58210"/>
    </ligand>
</feature>
<feature type="binding site" evidence="1">
    <location>
        <position position="299"/>
    </location>
    <ligand>
        <name>FMN</name>
        <dbReference type="ChEBI" id="CHEBI:58210"/>
    </ligand>
</feature>
<feature type="binding site" evidence="1">
    <location>
        <begin position="320"/>
        <end position="321"/>
    </location>
    <ligand>
        <name>FMN</name>
        <dbReference type="ChEBI" id="CHEBI:58210"/>
    </ligand>
</feature>
<protein>
    <recommendedName>
        <fullName evidence="1">Dihydroorotate dehydrogenase (quinone)</fullName>
        <ecNumber evidence="1">1.3.5.2</ecNumber>
    </recommendedName>
    <alternativeName>
        <fullName evidence="1">DHOdehase</fullName>
        <shortName evidence="1">DHOD</shortName>
        <shortName evidence="1">DHODase</shortName>
    </alternativeName>
    <alternativeName>
        <fullName evidence="1">Dihydroorotate oxidase</fullName>
    </alternativeName>
</protein>
<dbReference type="EC" id="1.3.5.2" evidence="1"/>
<dbReference type="EMBL" id="BX248357">
    <property type="protein sequence ID" value="CAE49793.1"/>
    <property type="molecule type" value="Genomic_DNA"/>
</dbReference>
<dbReference type="SMR" id="Q6NH79"/>
<dbReference type="STRING" id="257309.DIP1264"/>
<dbReference type="KEGG" id="cdi:DIP1264"/>
<dbReference type="HOGENOM" id="CLU_013640_2_0_11"/>
<dbReference type="UniPathway" id="UPA00070">
    <property type="reaction ID" value="UER00946"/>
</dbReference>
<dbReference type="Proteomes" id="UP000002198">
    <property type="component" value="Chromosome"/>
</dbReference>
<dbReference type="GO" id="GO:0005737">
    <property type="term" value="C:cytoplasm"/>
    <property type="evidence" value="ECO:0007669"/>
    <property type="project" value="InterPro"/>
</dbReference>
<dbReference type="GO" id="GO:0005886">
    <property type="term" value="C:plasma membrane"/>
    <property type="evidence" value="ECO:0007669"/>
    <property type="project" value="UniProtKB-SubCell"/>
</dbReference>
<dbReference type="GO" id="GO:0106430">
    <property type="term" value="F:dihydroorotate dehydrogenase (quinone) activity"/>
    <property type="evidence" value="ECO:0007669"/>
    <property type="project" value="UniProtKB-EC"/>
</dbReference>
<dbReference type="GO" id="GO:0006207">
    <property type="term" value="P:'de novo' pyrimidine nucleobase biosynthetic process"/>
    <property type="evidence" value="ECO:0007669"/>
    <property type="project" value="InterPro"/>
</dbReference>
<dbReference type="GO" id="GO:0044205">
    <property type="term" value="P:'de novo' UMP biosynthetic process"/>
    <property type="evidence" value="ECO:0007669"/>
    <property type="project" value="UniProtKB-UniRule"/>
</dbReference>
<dbReference type="CDD" id="cd04738">
    <property type="entry name" value="DHOD_2_like"/>
    <property type="match status" value="1"/>
</dbReference>
<dbReference type="FunFam" id="3.20.20.70:FF:000123">
    <property type="entry name" value="Dihydroorotate dehydrogenase (quinone)"/>
    <property type="match status" value="1"/>
</dbReference>
<dbReference type="Gene3D" id="3.20.20.70">
    <property type="entry name" value="Aldolase class I"/>
    <property type="match status" value="1"/>
</dbReference>
<dbReference type="HAMAP" id="MF_00225">
    <property type="entry name" value="DHO_dh_type2"/>
    <property type="match status" value="1"/>
</dbReference>
<dbReference type="InterPro" id="IPR013785">
    <property type="entry name" value="Aldolase_TIM"/>
</dbReference>
<dbReference type="InterPro" id="IPR050074">
    <property type="entry name" value="DHO_dehydrogenase"/>
</dbReference>
<dbReference type="InterPro" id="IPR005719">
    <property type="entry name" value="Dihydroorotate_DH_2"/>
</dbReference>
<dbReference type="InterPro" id="IPR005720">
    <property type="entry name" value="Dihydroorotate_DH_cat"/>
</dbReference>
<dbReference type="InterPro" id="IPR001295">
    <property type="entry name" value="Dihydroorotate_DH_CS"/>
</dbReference>
<dbReference type="NCBIfam" id="NF003645">
    <property type="entry name" value="PRK05286.1-2"/>
    <property type="match status" value="1"/>
</dbReference>
<dbReference type="NCBIfam" id="NF003648">
    <property type="entry name" value="PRK05286.2-1"/>
    <property type="match status" value="1"/>
</dbReference>
<dbReference type="NCBIfam" id="NF003652">
    <property type="entry name" value="PRK05286.2-5"/>
    <property type="match status" value="1"/>
</dbReference>
<dbReference type="NCBIfam" id="TIGR01036">
    <property type="entry name" value="pyrD_sub2"/>
    <property type="match status" value="1"/>
</dbReference>
<dbReference type="PANTHER" id="PTHR48109:SF4">
    <property type="entry name" value="DIHYDROOROTATE DEHYDROGENASE (QUINONE), MITOCHONDRIAL"/>
    <property type="match status" value="1"/>
</dbReference>
<dbReference type="PANTHER" id="PTHR48109">
    <property type="entry name" value="DIHYDROOROTATE DEHYDROGENASE (QUINONE), MITOCHONDRIAL-RELATED"/>
    <property type="match status" value="1"/>
</dbReference>
<dbReference type="Pfam" id="PF01180">
    <property type="entry name" value="DHO_dh"/>
    <property type="match status" value="1"/>
</dbReference>
<dbReference type="SUPFAM" id="SSF51395">
    <property type="entry name" value="FMN-linked oxidoreductases"/>
    <property type="match status" value="1"/>
</dbReference>
<dbReference type="PROSITE" id="PS00911">
    <property type="entry name" value="DHODEHASE_1"/>
    <property type="match status" value="1"/>
</dbReference>
<dbReference type="PROSITE" id="PS00912">
    <property type="entry name" value="DHODEHASE_2"/>
    <property type="match status" value="1"/>
</dbReference>
<proteinExistence type="inferred from homology"/>
<organism>
    <name type="scientific">Corynebacterium diphtheriae (strain ATCC 700971 / NCTC 13129 / Biotype gravis)</name>
    <dbReference type="NCBI Taxonomy" id="257309"/>
    <lineage>
        <taxon>Bacteria</taxon>
        <taxon>Bacillati</taxon>
        <taxon>Actinomycetota</taxon>
        <taxon>Actinomycetes</taxon>
        <taxon>Mycobacteriales</taxon>
        <taxon>Corynebacteriaceae</taxon>
        <taxon>Corynebacterium</taxon>
    </lineage>
</organism>
<sequence length="363" mass="38586">MRTKAYALALKGMFTMSPERIHHIITRGMQLVQAISPLRRAVGSILPVNDPILRQEVFGVTFPQPLGLAAGFDKNGEAPDVWAAFGFGYAELGTVTASPQPGNPTPRLFRLPADKAILNRMGFNNLGAAEVAKNLKRRKSDAVIGINIGKTKVVASKDAVNDYRRSALLLGNLADYLVINVSSPNTPGLRDLQAVESLRPIIAAVQESTSVPVLVKIAPDLSDDDIDAVADLAVEMGIAGIVATNTTISRNGLRTPHQDVADMGAGGISGAPVAQRSLEVLERLYAHVGTEMVLIGVGGISTPQQAWERIAAGATLLQGYTGMIYGGPDWIRDIHLGIAAQLRAHDLSSIDQAVGSKLPWTLQ</sequence>
<accession>Q6NH79</accession>
<evidence type="ECO:0000255" key="1">
    <source>
        <dbReference type="HAMAP-Rule" id="MF_00225"/>
    </source>
</evidence>
<gene>
    <name evidence="1" type="primary">pyrD</name>
    <name type="ordered locus">DIP1264</name>
</gene>
<keyword id="KW-1003">Cell membrane</keyword>
<keyword id="KW-0285">Flavoprotein</keyword>
<keyword id="KW-0288">FMN</keyword>
<keyword id="KW-0472">Membrane</keyword>
<keyword id="KW-0560">Oxidoreductase</keyword>
<keyword id="KW-0665">Pyrimidine biosynthesis</keyword>
<keyword id="KW-1185">Reference proteome</keyword>